<sequence length="622" mass="66068">MALLQISEPGMAPAPHQRRLAVGIDLGTTNSLVAAVRNSVPEVLPDEAGRVLLPSVVRYLEKGGRRIGHEAKEQAATDPRNTIVSVKRFMGRGKAEVEGAANAPYEFVDAPGMVQIRTIDGVKSPVEVSAEILATLRYRAEDSLGDDLVGAVITVPAYFDEAQRQATKDAARLAGLNVLRLLNEPTAAAIAYGLDNGSEGLYAVYDLGGGTFDLSILKLTKGVFEVLAAGGDSALGGDDFDHALFGHVLAQAGIDVKTLAPEDVRLLLDRVRVLKEALSSAPQASLDVTLSGGAHLVQTISHDTFASLVEPLVQRTLTPTRKALRDAQVTSADIKGVVLVGGATRMPVIRDAVAKYFGQPPLVNLDPDQVVALGAAIQADLLAGNRGTGDDWLLLDVIPLSLGVETMGGLVEKIIPRNSTIPIARAQEFTTFKDGQTAMAIHVVQGERELVADCRSLARFELRGIPPMTAGAARIRVTYQVDADGLLSVFAREQLSGVEASVVVKPSYGLADDDIAKMLEDSFKTAEIDMRARALREAQVEAERMLEATQAALAADGELLDADERTQVDTLAAALRAVAQGDDTNAIEAATKALAEGTDEFAARRMDKSIKRALSGRRLDEI</sequence>
<gene>
    <name evidence="1" type="primary">hscA</name>
    <name type="ordered locus">Bcep18194_A5428</name>
</gene>
<feature type="chain" id="PRO_1000044852" description="Chaperone protein HscA homolog">
    <location>
        <begin position="1"/>
        <end position="622"/>
    </location>
</feature>
<organism>
    <name type="scientific">Burkholderia lata (strain ATCC 17760 / DSM 23089 / LMG 22485 / NCIMB 9086 / R18194 / 383)</name>
    <dbReference type="NCBI Taxonomy" id="482957"/>
    <lineage>
        <taxon>Bacteria</taxon>
        <taxon>Pseudomonadati</taxon>
        <taxon>Pseudomonadota</taxon>
        <taxon>Betaproteobacteria</taxon>
        <taxon>Burkholderiales</taxon>
        <taxon>Burkholderiaceae</taxon>
        <taxon>Burkholderia</taxon>
        <taxon>Burkholderia cepacia complex</taxon>
    </lineage>
</organism>
<proteinExistence type="inferred from homology"/>
<name>HSCA_BURL3</name>
<evidence type="ECO:0000255" key="1">
    <source>
        <dbReference type="HAMAP-Rule" id="MF_00679"/>
    </source>
</evidence>
<comment type="function">
    <text evidence="1">Chaperone involved in the maturation of iron-sulfur cluster-containing proteins. Has a low intrinsic ATPase activity which is markedly stimulated by HscB.</text>
</comment>
<comment type="similarity">
    <text evidence="1">Belongs to the heat shock protein 70 family.</text>
</comment>
<reference key="1">
    <citation type="submission" date="2005-10" db="EMBL/GenBank/DDBJ databases">
        <title>Complete sequence of chromosome 1 of Burkholderia sp. 383.</title>
        <authorList>
            <consortium name="US DOE Joint Genome Institute"/>
            <person name="Copeland A."/>
            <person name="Lucas S."/>
            <person name="Lapidus A."/>
            <person name="Barry K."/>
            <person name="Detter J.C."/>
            <person name="Glavina T."/>
            <person name="Hammon N."/>
            <person name="Israni S."/>
            <person name="Pitluck S."/>
            <person name="Chain P."/>
            <person name="Malfatti S."/>
            <person name="Shin M."/>
            <person name="Vergez L."/>
            <person name="Schmutz J."/>
            <person name="Larimer F."/>
            <person name="Land M."/>
            <person name="Kyrpides N."/>
            <person name="Lykidis A."/>
            <person name="Richardson P."/>
        </authorList>
    </citation>
    <scope>NUCLEOTIDE SEQUENCE [LARGE SCALE GENOMIC DNA]</scope>
    <source>
        <strain>ATCC 17760 / DSM 23089 / LMG 22485 / NCIMB 9086 / R18194 / 383</strain>
    </source>
</reference>
<protein>
    <recommendedName>
        <fullName evidence="1">Chaperone protein HscA homolog</fullName>
    </recommendedName>
</protein>
<accession>Q39EU4</accession>
<dbReference type="EMBL" id="CP000151">
    <property type="protein sequence ID" value="ABB09022.1"/>
    <property type="molecule type" value="Genomic_DNA"/>
</dbReference>
<dbReference type="RefSeq" id="WP_011352559.1">
    <property type="nucleotide sequence ID" value="NC_007510.1"/>
</dbReference>
<dbReference type="SMR" id="Q39EU4"/>
<dbReference type="GeneID" id="45095308"/>
<dbReference type="KEGG" id="bur:Bcep18194_A5428"/>
<dbReference type="PATRIC" id="fig|482957.22.peg.2381"/>
<dbReference type="HOGENOM" id="CLU_005965_2_1_4"/>
<dbReference type="Proteomes" id="UP000002705">
    <property type="component" value="Chromosome 1"/>
</dbReference>
<dbReference type="GO" id="GO:0005524">
    <property type="term" value="F:ATP binding"/>
    <property type="evidence" value="ECO:0007669"/>
    <property type="project" value="UniProtKB-KW"/>
</dbReference>
<dbReference type="GO" id="GO:0016887">
    <property type="term" value="F:ATP hydrolysis activity"/>
    <property type="evidence" value="ECO:0007669"/>
    <property type="project" value="UniProtKB-UniRule"/>
</dbReference>
<dbReference type="GO" id="GO:0140662">
    <property type="term" value="F:ATP-dependent protein folding chaperone"/>
    <property type="evidence" value="ECO:0007669"/>
    <property type="project" value="InterPro"/>
</dbReference>
<dbReference type="GO" id="GO:0051082">
    <property type="term" value="F:unfolded protein binding"/>
    <property type="evidence" value="ECO:0007669"/>
    <property type="project" value="InterPro"/>
</dbReference>
<dbReference type="GO" id="GO:0016226">
    <property type="term" value="P:iron-sulfur cluster assembly"/>
    <property type="evidence" value="ECO:0007669"/>
    <property type="project" value="InterPro"/>
</dbReference>
<dbReference type="CDD" id="cd10236">
    <property type="entry name" value="ASKHA_NBD_HSP70_HscA"/>
    <property type="match status" value="1"/>
</dbReference>
<dbReference type="FunFam" id="3.30.420.40:FF:000046">
    <property type="entry name" value="Chaperone protein HscA"/>
    <property type="match status" value="1"/>
</dbReference>
<dbReference type="FunFam" id="2.60.34.10:FF:000005">
    <property type="entry name" value="Chaperone protein HscA homolog"/>
    <property type="match status" value="1"/>
</dbReference>
<dbReference type="Gene3D" id="1.20.1270.10">
    <property type="match status" value="1"/>
</dbReference>
<dbReference type="Gene3D" id="3.30.420.40">
    <property type="match status" value="2"/>
</dbReference>
<dbReference type="Gene3D" id="3.90.640.10">
    <property type="entry name" value="Actin, Chain A, domain 4"/>
    <property type="match status" value="1"/>
</dbReference>
<dbReference type="Gene3D" id="2.60.34.10">
    <property type="entry name" value="Substrate Binding Domain Of DNAk, Chain A, domain 1"/>
    <property type="match status" value="1"/>
</dbReference>
<dbReference type="HAMAP" id="MF_00679">
    <property type="entry name" value="HscA"/>
    <property type="match status" value="1"/>
</dbReference>
<dbReference type="InterPro" id="IPR043129">
    <property type="entry name" value="ATPase_NBD"/>
</dbReference>
<dbReference type="InterPro" id="IPR018181">
    <property type="entry name" value="Heat_shock_70_CS"/>
</dbReference>
<dbReference type="InterPro" id="IPR042039">
    <property type="entry name" value="HscA_NBD"/>
</dbReference>
<dbReference type="InterPro" id="IPR029048">
    <property type="entry name" value="HSP70_C_sf"/>
</dbReference>
<dbReference type="InterPro" id="IPR029047">
    <property type="entry name" value="HSP70_peptide-bd_sf"/>
</dbReference>
<dbReference type="InterPro" id="IPR013126">
    <property type="entry name" value="Hsp_70_fam"/>
</dbReference>
<dbReference type="InterPro" id="IPR010236">
    <property type="entry name" value="ISC_FeS_clus_asmbl_HscA"/>
</dbReference>
<dbReference type="NCBIfam" id="TIGR01991">
    <property type="entry name" value="HscA"/>
    <property type="match status" value="1"/>
</dbReference>
<dbReference type="NCBIfam" id="NF003520">
    <property type="entry name" value="PRK05183.1"/>
    <property type="match status" value="1"/>
</dbReference>
<dbReference type="PANTHER" id="PTHR19375">
    <property type="entry name" value="HEAT SHOCK PROTEIN 70KDA"/>
    <property type="match status" value="1"/>
</dbReference>
<dbReference type="Pfam" id="PF00012">
    <property type="entry name" value="HSP70"/>
    <property type="match status" value="1"/>
</dbReference>
<dbReference type="PRINTS" id="PR00301">
    <property type="entry name" value="HEATSHOCK70"/>
</dbReference>
<dbReference type="SUPFAM" id="SSF53067">
    <property type="entry name" value="Actin-like ATPase domain"/>
    <property type="match status" value="2"/>
</dbReference>
<dbReference type="SUPFAM" id="SSF100934">
    <property type="entry name" value="Heat shock protein 70kD (HSP70), C-terminal subdomain"/>
    <property type="match status" value="1"/>
</dbReference>
<dbReference type="SUPFAM" id="SSF100920">
    <property type="entry name" value="Heat shock protein 70kD (HSP70), peptide-binding domain"/>
    <property type="match status" value="1"/>
</dbReference>
<dbReference type="PROSITE" id="PS00297">
    <property type="entry name" value="HSP70_1"/>
    <property type="match status" value="1"/>
</dbReference>
<dbReference type="PROSITE" id="PS00329">
    <property type="entry name" value="HSP70_2"/>
    <property type="match status" value="1"/>
</dbReference>
<dbReference type="PROSITE" id="PS01036">
    <property type="entry name" value="HSP70_3"/>
    <property type="match status" value="1"/>
</dbReference>
<keyword id="KW-0067">ATP-binding</keyword>
<keyword id="KW-0143">Chaperone</keyword>
<keyword id="KW-0547">Nucleotide-binding</keyword>